<sequence>MRLPRRLKIKRFHKPSCSSILPKYPGCPFSLNLSLSFLNFTHYDVHLQMINRFFPNVYYSVVIPIILLSTSYSAKIAPKCRDTDMNCAVWVATNTSDCENVELVNSHCPRTCQTCGEPIDPKYDVKLLPAKLKSIAWMVGRWRSEFGGKAFFPTIPKFTYGEQVDITIADNSQDTHTPLLNYTAFAWDINMPDGDPTEIHSENGYIAVEYDKEQEKEYVSLNTAMSNGFMTIEEGESGPNQVKFRLQRIGRISFSHDSAVRIMFREWTLLDENRLEARLLMTTTITRRLMEHTAVIYKKIYP</sequence>
<keyword id="KW-1015">Disulfide bond</keyword>
<keyword id="KW-0325">Glycoprotein</keyword>
<keyword id="KW-1185">Reference proteome</keyword>
<keyword id="KW-0732">Signal</keyword>
<feature type="signal peptide" evidence="1">
    <location>
        <begin position="1"/>
        <end status="unknown"/>
    </location>
</feature>
<feature type="chain" id="PRO_0000014277" description="Uncharacterized protein C28H8.5">
    <location>
        <begin status="unknown"/>
        <end position="302"/>
    </location>
</feature>
<feature type="domain" description="ShKT" evidence="2">
    <location>
        <begin position="80"/>
        <end position="115"/>
    </location>
</feature>
<feature type="glycosylation site" description="N-linked (GlcNAc...) asparagine" evidence="1">
    <location>
        <position position="32"/>
    </location>
</feature>
<feature type="glycosylation site" description="N-linked (GlcNAc...) asparagine" evidence="1">
    <location>
        <position position="39"/>
    </location>
</feature>
<feature type="glycosylation site" description="N-linked (GlcNAc...) asparagine" evidence="1">
    <location>
        <position position="94"/>
    </location>
</feature>
<feature type="glycosylation site" description="N-linked (GlcNAc...) asparagine" evidence="1">
    <location>
        <position position="181"/>
    </location>
</feature>
<feature type="disulfide bond" evidence="2">
    <location>
        <begin position="80"/>
        <end position="115"/>
    </location>
</feature>
<feature type="disulfide bond" evidence="2">
    <location>
        <begin position="87"/>
        <end position="108"/>
    </location>
</feature>
<feature type="disulfide bond" evidence="2">
    <location>
        <begin position="98"/>
        <end position="112"/>
    </location>
</feature>
<gene>
    <name type="ORF">C28H8.5</name>
</gene>
<accession>Q09244</accession>
<name>YP95_CAEEL</name>
<evidence type="ECO:0000255" key="1"/>
<evidence type="ECO:0000255" key="2">
    <source>
        <dbReference type="PROSITE-ProRule" id="PRU01005"/>
    </source>
</evidence>
<protein>
    <recommendedName>
        <fullName>Uncharacterized protein C28H8.5</fullName>
    </recommendedName>
</protein>
<organism>
    <name type="scientific">Caenorhabditis elegans</name>
    <dbReference type="NCBI Taxonomy" id="6239"/>
    <lineage>
        <taxon>Eukaryota</taxon>
        <taxon>Metazoa</taxon>
        <taxon>Ecdysozoa</taxon>
        <taxon>Nematoda</taxon>
        <taxon>Chromadorea</taxon>
        <taxon>Rhabditida</taxon>
        <taxon>Rhabditina</taxon>
        <taxon>Rhabditomorpha</taxon>
        <taxon>Rhabditoidea</taxon>
        <taxon>Rhabditidae</taxon>
        <taxon>Peloderinae</taxon>
        <taxon>Caenorhabditis</taxon>
    </lineage>
</organism>
<proteinExistence type="inferred from homology"/>
<reference key="1">
    <citation type="journal article" date="1998" name="Science">
        <title>Genome sequence of the nematode C. elegans: a platform for investigating biology.</title>
        <authorList>
            <consortium name="The C. elegans sequencing consortium"/>
        </authorList>
    </citation>
    <scope>NUCLEOTIDE SEQUENCE [LARGE SCALE GENOMIC DNA]</scope>
    <source>
        <strain>Bristol N2</strain>
    </source>
</reference>
<dbReference type="EMBL" id="FO080703">
    <property type="protein sequence ID" value="CCD65965.1"/>
    <property type="molecule type" value="Genomic_DNA"/>
</dbReference>
<dbReference type="PIR" id="B88469">
    <property type="entry name" value="B88469"/>
</dbReference>
<dbReference type="RefSeq" id="NP_001040848.1">
    <property type="nucleotide sequence ID" value="NM_001047383.3"/>
</dbReference>
<dbReference type="SMR" id="Q09244"/>
<dbReference type="FunCoup" id="Q09244">
    <property type="interactions" value="6"/>
</dbReference>
<dbReference type="STRING" id="6239.C28H8.5a.1"/>
<dbReference type="PaxDb" id="6239-C28H8.5a"/>
<dbReference type="EnsemblMetazoa" id="C28H8.5a.1">
    <property type="protein sequence ID" value="C28H8.5a.1"/>
    <property type="gene ID" value="WBGene00016196"/>
</dbReference>
<dbReference type="GeneID" id="182996"/>
<dbReference type="KEGG" id="cel:CELE_C28H8.5"/>
<dbReference type="UCSC" id="C28H8.5a">
    <property type="organism name" value="c. elegans"/>
</dbReference>
<dbReference type="AGR" id="WB:WBGene00016196"/>
<dbReference type="CTD" id="182996"/>
<dbReference type="WormBase" id="C28H8.5a">
    <property type="protein sequence ID" value="CE01827"/>
    <property type="gene ID" value="WBGene00016196"/>
</dbReference>
<dbReference type="eggNOG" id="KOG3371">
    <property type="taxonomic scope" value="Eukaryota"/>
</dbReference>
<dbReference type="HOGENOM" id="CLU_085483_2_0_1"/>
<dbReference type="InParanoid" id="Q09244"/>
<dbReference type="OMA" id="AMSNGFM"/>
<dbReference type="OrthoDB" id="58529at2759"/>
<dbReference type="PhylomeDB" id="Q09244"/>
<dbReference type="PRO" id="PR:Q09244"/>
<dbReference type="Proteomes" id="UP000001940">
    <property type="component" value="Chromosome III"/>
</dbReference>
<dbReference type="Bgee" id="WBGene00016196">
    <property type="expression patterns" value="Expressed in larva and 1 other cell type or tissue"/>
</dbReference>
<dbReference type="ExpressionAtlas" id="Q09244">
    <property type="expression patterns" value="baseline and differential"/>
</dbReference>
<dbReference type="CDD" id="cd07828">
    <property type="entry name" value="lipocalin_heme-bd-THAP4-like"/>
    <property type="match status" value="1"/>
</dbReference>
<dbReference type="Gene3D" id="2.40.128.20">
    <property type="match status" value="1"/>
</dbReference>
<dbReference type="InterPro" id="IPR012674">
    <property type="entry name" value="Calycin"/>
</dbReference>
<dbReference type="InterPro" id="IPR045165">
    <property type="entry name" value="Nitrobindin"/>
</dbReference>
<dbReference type="InterPro" id="IPR003582">
    <property type="entry name" value="ShKT_dom"/>
</dbReference>
<dbReference type="InterPro" id="IPR014878">
    <property type="entry name" value="THAP4-like_heme-bd"/>
</dbReference>
<dbReference type="PANTHER" id="PTHR15854:SF2">
    <property type="entry name" value="MARVEL DOMAIN-CONTAINING PROTEIN-RELATED"/>
    <property type="match status" value="1"/>
</dbReference>
<dbReference type="PANTHER" id="PTHR15854">
    <property type="entry name" value="THAP4 PROTEIN"/>
    <property type="match status" value="1"/>
</dbReference>
<dbReference type="Pfam" id="PF01549">
    <property type="entry name" value="ShK"/>
    <property type="match status" value="1"/>
</dbReference>
<dbReference type="Pfam" id="PF08768">
    <property type="entry name" value="THAP4_heme-bd"/>
    <property type="match status" value="1"/>
</dbReference>
<dbReference type="SMART" id="SM00254">
    <property type="entry name" value="ShKT"/>
    <property type="match status" value="1"/>
</dbReference>
<dbReference type="SUPFAM" id="SSF50814">
    <property type="entry name" value="Lipocalins"/>
    <property type="match status" value="1"/>
</dbReference>
<dbReference type="PROSITE" id="PS51670">
    <property type="entry name" value="SHKT"/>
    <property type="match status" value="1"/>
</dbReference>